<protein>
    <recommendedName>
        <fullName>Dibenzothiophene-sulfone monooxygenase</fullName>
        <shortName>DBTO2 monooxygenase</shortName>
        <shortName>DBTO2-MO</shortName>
        <ecNumber evidence="2 6">1.14.14.22</ecNumber>
    </recommendedName>
    <alternativeName>
        <fullName evidence="4">Dibenzothiophene desulfurization enzyme A</fullName>
    </alternativeName>
</protein>
<name>DSZA_RHOSH</name>
<organism>
    <name type="scientific">Rhodococcus erythropolis (strain XP)</name>
    <dbReference type="NCBI Taxonomy" id="1078016"/>
    <lineage>
        <taxon>Bacteria</taxon>
        <taxon>Bacillati</taxon>
        <taxon>Actinomycetota</taxon>
        <taxon>Actinomycetes</taxon>
        <taxon>Mycobacteriales</taxon>
        <taxon>Nocardiaceae</taxon>
        <taxon>Rhodococcus</taxon>
        <taxon>Rhodococcus erythropolis group</taxon>
    </lineage>
</organism>
<sequence>MTQQRQMHLAGFFSAGNVTHAHGAWRHTDASNDFLSGKYYQHIARTLERGKFDLLFLPDGLAVEDSYGDNLDTGVGLGGQGAVALEPASVVATMAAVTEHLGLGATISATYYPPYHVARVFATLDQLSGGRVSWNVVTSLNDAEARNFGINQHLEHDARYDRADEFLEAVKKLWNSWDEDALVLDKAAGVFADPAKVHYVDHHGEWLNVRGPLQVPRSPQGEPVILQAGLSPRGRRFAGKWAEAVFSLAPNLEVMQATYQGIKAEVDAAGRDPDQTKIFTAVMPVLGESQAVAQERLEYLNSLVHPEVGLSTLSSHTGINLAAYPLDTPIKDILRDLQDRNVPTQLHMFAAATHSEELTLAEMGRRYGTNVGFVPQWAGTGEQIADELIRHFEGGAADGFIISPAFLPGSYDEFVDQVVPVLQDRGYFRTEYQGNTLRDHLGLRVPQLQGQPS</sequence>
<proteinExistence type="evidence at protein level"/>
<evidence type="ECO:0000250" key="1">
    <source>
        <dbReference type="UniProtKB" id="O34974"/>
    </source>
</evidence>
<evidence type="ECO:0000250" key="2">
    <source>
        <dbReference type="UniProtKB" id="P54995"/>
    </source>
</evidence>
<evidence type="ECO:0000269" key="3">
    <source>
    </source>
</evidence>
<evidence type="ECO:0000303" key="4">
    <source>
    </source>
</evidence>
<evidence type="ECO:0000305" key="5"/>
<evidence type="ECO:0000305" key="6">
    <source>
    </source>
</evidence>
<comment type="function">
    <text evidence="2 6">Catalyzes the second step of the '4S' desulfurization pathway that removes covalently bound sulfur from dibenzothiophene (DBT) without breaking carbon-carbon bonds. Metabolizes DBT-sulfone (DBTO2 or DBT 5,5-dioxide) to 2-(2'-hydroxyphenyl)benzene sulphinate (HBPS).</text>
</comment>
<comment type="catalytic activity">
    <reaction evidence="2 6">
        <text>dibenzothiophene 5,5-dioxide + FMNH2 + NADH + O2 = 2'-hydroxybiphenyl-2-sulfinate + FMN + NAD(+) + H2O + H(+)</text>
        <dbReference type="Rhea" id="RHEA:12312"/>
        <dbReference type="ChEBI" id="CHEBI:15377"/>
        <dbReference type="ChEBI" id="CHEBI:15378"/>
        <dbReference type="ChEBI" id="CHEBI:15379"/>
        <dbReference type="ChEBI" id="CHEBI:18218"/>
        <dbReference type="ChEBI" id="CHEBI:57540"/>
        <dbReference type="ChEBI" id="CHEBI:57618"/>
        <dbReference type="ChEBI" id="CHEBI:57945"/>
        <dbReference type="ChEBI" id="CHEBI:58210"/>
        <dbReference type="ChEBI" id="CHEBI:90356"/>
        <dbReference type="EC" id="1.14.14.22"/>
    </reaction>
</comment>
<comment type="pathway">
    <text evidence="3">Sulfur metabolism; dibenzothiophene degradation.</text>
</comment>
<comment type="subunit">
    <text evidence="2">Homodimer.</text>
</comment>
<comment type="subcellular location">
    <subcellularLocation>
        <location evidence="5">Cytoplasm</location>
    </subcellularLocation>
</comment>
<comment type="biotechnology">
    <text evidence="3">Can be used to remove sulfur from polycyclic aromatic sulfur compounds found in gasoline and diesel (biodesulfurization), which are a considerable source of pollution. As the substrates are not very soluble in conventional media, biphasic systems may help improve catalysis. Expression of dszD-dszA-dszB-dszC (cloned in this order) in organic-solvent-tolerant P.putida strain Idaho allows P.putida to grow on 10% p-xylene with DBT as the sole sulfur source. In this P.putida strain 97% of DBT was degraded, 71% of 4,6-dimethyldibenzothiophene and about 50% of 3-methyldibenzothiophene or 4-methyldibenzothiophene was degraded in the presence of 10% p-xylene. Degradation of DBT in the presence of 10% of other organic solvents was tested; when grown in dodecane, cyclohexane or heptanol bacteria metabolized DBT as well as p-xylene, while other organic solvents degraded DBT slightly less well.</text>
</comment>
<comment type="miscellaneous">
    <text evidence="2">Reduced flavin is provided by flavin reductase DszD.</text>
</comment>
<comment type="similarity">
    <text evidence="5">Belongs to the NtaA/SnaA/DszA monooxygenase family.</text>
</comment>
<feature type="chain" id="PRO_0000455393" description="Dibenzothiophene-sulfone monooxygenase">
    <location>
        <begin position="1"/>
        <end position="453"/>
    </location>
</feature>
<feature type="binding site" evidence="1">
    <location>
        <position position="59"/>
    </location>
    <ligand>
        <name>FMN</name>
        <dbReference type="ChEBI" id="CHEBI:58210"/>
    </ligand>
</feature>
<feature type="binding site" evidence="1">
    <location>
        <position position="106"/>
    </location>
    <ligand>
        <name>FMN</name>
        <dbReference type="ChEBI" id="CHEBI:58210"/>
    </ligand>
</feature>
<feature type="binding site" evidence="1">
    <location>
        <position position="156"/>
    </location>
    <ligand>
        <name>FMN</name>
        <dbReference type="ChEBI" id="CHEBI:58210"/>
    </ligand>
</feature>
<feature type="binding site" evidence="1">
    <location>
        <position position="160"/>
    </location>
    <ligand>
        <name>FMN</name>
        <dbReference type="ChEBI" id="CHEBI:58210"/>
    </ligand>
</feature>
<feature type="binding site" evidence="1">
    <location>
        <position position="231"/>
    </location>
    <ligand>
        <name>FMN</name>
        <dbReference type="ChEBI" id="CHEBI:58210"/>
    </ligand>
</feature>
<reference key="1">
    <citation type="journal article" date="2006" name="Appl. Environ. Microbiol.">
        <title>Biodesulfurization in biphasic systems containing organic solvents.</title>
        <authorList>
            <person name="Tao F."/>
            <person name="Yu B."/>
            <person name="Xu P."/>
            <person name="Ma C.Q."/>
        </authorList>
    </citation>
    <scope>NUCLEOTIDE SEQUENCE [GENOMIC DNA]</scope>
    <scope>PROBABLE FUNCTION</scope>
    <scope>PATHWAY</scope>
    <scope>BIOTECHNOLOGY</scope>
    <source>
        <strain>XP</strain>
    </source>
</reference>
<keyword id="KW-0963">Cytoplasm</keyword>
<keyword id="KW-0285">Flavoprotein</keyword>
<keyword id="KW-0288">FMN</keyword>
<keyword id="KW-0503">Monooxygenase</keyword>
<keyword id="KW-0547">Nucleotide-binding</keyword>
<keyword id="KW-0560">Oxidoreductase</keyword>
<accession>Q6WNP3</accession>
<dbReference type="EC" id="1.14.14.22" evidence="2 6"/>
<dbReference type="EMBL" id="AY278323">
    <property type="protein sequence ID" value="AAP33509.1"/>
    <property type="molecule type" value="Genomic_DNA"/>
</dbReference>
<dbReference type="RefSeq" id="WP_029538932.1">
    <property type="nucleotide sequence ID" value="NZ_AGCF01000009.1"/>
</dbReference>
<dbReference type="SMR" id="Q6WNP3"/>
<dbReference type="UniPathway" id="UPA00346"/>
<dbReference type="GO" id="GO:0005737">
    <property type="term" value="C:cytoplasm"/>
    <property type="evidence" value="ECO:0007669"/>
    <property type="project" value="UniProtKB-SubCell"/>
</dbReference>
<dbReference type="GO" id="GO:0004497">
    <property type="term" value="F:monooxygenase activity"/>
    <property type="evidence" value="ECO:0007669"/>
    <property type="project" value="UniProtKB-KW"/>
</dbReference>
<dbReference type="GO" id="GO:0000166">
    <property type="term" value="F:nucleotide binding"/>
    <property type="evidence" value="ECO:0007669"/>
    <property type="project" value="UniProtKB-KW"/>
</dbReference>
<dbReference type="GO" id="GO:0016705">
    <property type="term" value="F:oxidoreductase activity, acting on paired donors, with incorporation or reduction of molecular oxygen"/>
    <property type="evidence" value="ECO:0007669"/>
    <property type="project" value="InterPro"/>
</dbReference>
<dbReference type="GO" id="GO:0018896">
    <property type="term" value="P:dibenzothiophene catabolic process"/>
    <property type="evidence" value="ECO:0007669"/>
    <property type="project" value="UniProtKB-UniPathway"/>
</dbReference>
<dbReference type="CDD" id="cd01095">
    <property type="entry name" value="Nitrilotriacetate_monoxgenase"/>
    <property type="match status" value="1"/>
</dbReference>
<dbReference type="Gene3D" id="3.20.20.30">
    <property type="entry name" value="Luciferase-like domain"/>
    <property type="match status" value="1"/>
</dbReference>
<dbReference type="InterPro" id="IPR051260">
    <property type="entry name" value="Diverse_substr_monoxygenases"/>
</dbReference>
<dbReference type="InterPro" id="IPR011251">
    <property type="entry name" value="Luciferase-like_dom"/>
</dbReference>
<dbReference type="InterPro" id="IPR036661">
    <property type="entry name" value="Luciferase-like_sf"/>
</dbReference>
<dbReference type="InterPro" id="IPR016215">
    <property type="entry name" value="NTA_MOA"/>
</dbReference>
<dbReference type="NCBIfam" id="TIGR03860">
    <property type="entry name" value="FMN_nitrolo"/>
    <property type="match status" value="1"/>
</dbReference>
<dbReference type="PANTHER" id="PTHR30011">
    <property type="entry name" value="ALKANESULFONATE MONOOXYGENASE-RELATED"/>
    <property type="match status" value="1"/>
</dbReference>
<dbReference type="PANTHER" id="PTHR30011:SF16">
    <property type="entry name" value="C2H2 FINGER DOMAIN TRANSCRIPTION FACTOR (EUROFUNG)-RELATED"/>
    <property type="match status" value="1"/>
</dbReference>
<dbReference type="Pfam" id="PF00296">
    <property type="entry name" value="Bac_luciferase"/>
    <property type="match status" value="1"/>
</dbReference>
<dbReference type="PIRSF" id="PIRSF000337">
    <property type="entry name" value="NTA_MOA"/>
    <property type="match status" value="1"/>
</dbReference>
<dbReference type="SUPFAM" id="SSF51679">
    <property type="entry name" value="Bacterial luciferase-like"/>
    <property type="match status" value="1"/>
</dbReference>
<gene>
    <name evidence="4" type="primary">dszA</name>
</gene>